<protein>
    <recommendedName>
        <fullName>Histone H2B</fullName>
    </recommendedName>
</protein>
<keyword id="KW-0007">Acetylation</keyword>
<keyword id="KW-0158">Chromosome</keyword>
<keyword id="KW-0238">DNA-binding</keyword>
<keyword id="KW-1017">Isopeptide bond</keyword>
<keyword id="KW-0544">Nucleosome core</keyword>
<keyword id="KW-0539">Nucleus</keyword>
<keyword id="KW-1185">Reference proteome</keyword>
<keyword id="KW-0832">Ubl conjugation</keyword>
<sequence length="147" mass="16087">MAPKAEKKPAEKKPAEEKKAVAEKAPAEKKPKAGKKLPKEGGAAAGDKKKKRVKKSVETYKIYIFKVLKQVHPDIGISSKAMGIMNSFINDIFEKLAQEASRLARYNKKPTITSREIQTAVRLVLPGELAKHAVSEGTKAVTKFTSS</sequence>
<accession>O22582</accession>
<dbReference type="EMBL" id="AF025667">
    <property type="protein sequence ID" value="AAB97163.1"/>
    <property type="molecule type" value="mRNA"/>
</dbReference>
<dbReference type="PIR" id="T09722">
    <property type="entry name" value="T09722"/>
</dbReference>
<dbReference type="RefSeq" id="XP_016740575.1">
    <property type="nucleotide sequence ID" value="XM_016885086.1"/>
</dbReference>
<dbReference type="SMR" id="O22582"/>
<dbReference type="STRING" id="3635.O22582"/>
<dbReference type="PaxDb" id="3635-O22582"/>
<dbReference type="KEGG" id="ghi:107950275"/>
<dbReference type="OMA" id="YERVFCF"/>
<dbReference type="Proteomes" id="UP000189702">
    <property type="component" value="Chromosome 7"/>
</dbReference>
<dbReference type="GO" id="GO:0000786">
    <property type="term" value="C:nucleosome"/>
    <property type="evidence" value="ECO:0007669"/>
    <property type="project" value="UniProtKB-KW"/>
</dbReference>
<dbReference type="GO" id="GO:0005634">
    <property type="term" value="C:nucleus"/>
    <property type="evidence" value="ECO:0007669"/>
    <property type="project" value="UniProtKB-SubCell"/>
</dbReference>
<dbReference type="GO" id="GO:0003677">
    <property type="term" value="F:DNA binding"/>
    <property type="evidence" value="ECO:0000318"/>
    <property type="project" value="GO_Central"/>
</dbReference>
<dbReference type="GO" id="GO:0046982">
    <property type="term" value="F:protein heterodimerization activity"/>
    <property type="evidence" value="ECO:0007669"/>
    <property type="project" value="InterPro"/>
</dbReference>
<dbReference type="GO" id="GO:0030527">
    <property type="term" value="F:structural constituent of chromatin"/>
    <property type="evidence" value="ECO:0007669"/>
    <property type="project" value="InterPro"/>
</dbReference>
<dbReference type="CDD" id="cd22910">
    <property type="entry name" value="HFD_H2B"/>
    <property type="match status" value="1"/>
</dbReference>
<dbReference type="FunFam" id="1.10.20.10:FF:000014">
    <property type="entry name" value="Histone H2B"/>
    <property type="match status" value="1"/>
</dbReference>
<dbReference type="Gene3D" id="1.10.20.10">
    <property type="entry name" value="Histone, subunit A"/>
    <property type="match status" value="1"/>
</dbReference>
<dbReference type="InterPro" id="IPR009072">
    <property type="entry name" value="Histone-fold"/>
</dbReference>
<dbReference type="InterPro" id="IPR007125">
    <property type="entry name" value="Histone_H2A/H2B/H3"/>
</dbReference>
<dbReference type="InterPro" id="IPR000558">
    <property type="entry name" value="Histone_H2B"/>
</dbReference>
<dbReference type="InterPro" id="IPR055333">
    <property type="entry name" value="HISTONE_H2B_site"/>
</dbReference>
<dbReference type="PANTHER" id="PTHR23428">
    <property type="entry name" value="HISTONE H2B"/>
    <property type="match status" value="1"/>
</dbReference>
<dbReference type="Pfam" id="PF00125">
    <property type="entry name" value="Histone"/>
    <property type="match status" value="1"/>
</dbReference>
<dbReference type="PRINTS" id="PR00621">
    <property type="entry name" value="HISTONEH2B"/>
</dbReference>
<dbReference type="SMART" id="SM00427">
    <property type="entry name" value="H2B"/>
    <property type="match status" value="1"/>
</dbReference>
<dbReference type="SUPFAM" id="SSF47113">
    <property type="entry name" value="Histone-fold"/>
    <property type="match status" value="1"/>
</dbReference>
<dbReference type="PROSITE" id="PS00357">
    <property type="entry name" value="HISTONE_H2B"/>
    <property type="match status" value="1"/>
</dbReference>
<comment type="function">
    <text>Core component of nucleosome. Nucleosomes wrap and compact DNA into chromatin, limiting DNA accessibility to the cellular machineries which require DNA as a template. Histones thereby play a central role in transcription regulation, DNA repair, DNA replication and chromosomal stability. DNA accessibility is regulated via a complex set of post-translational modifications of histones, also called histone code, and nucleosome remodeling.</text>
</comment>
<comment type="subunit">
    <text>The nucleosome is a histone octamer containing two molecules each of H2A, H2B, H3 and H4 assembled in one H3-H4 heterotetramer and two H2A-H2B heterodimers. The octamer wraps approximately 147 bp of DNA.</text>
</comment>
<comment type="subcellular location">
    <subcellularLocation>
        <location>Nucleus</location>
    </subcellularLocation>
    <subcellularLocation>
        <location>Chromosome</location>
    </subcellularLocation>
</comment>
<comment type="PTM">
    <text evidence="1">Can be acetylated to form H2BK6ac, H2BK33ac and H2BK34ac.</text>
</comment>
<comment type="PTM">
    <text evidence="1">Monoubiquitinated to form H2BK143ub1; may give a specific tag for epigenetic transcriptional activation.</text>
</comment>
<comment type="similarity">
    <text evidence="3">Belongs to the histone H2B family.</text>
</comment>
<comment type="caution">
    <text evidence="3">To ensure consistency between histone entries, we follow the 'Brno' nomenclature for histone modifications, with positions referring to those used in the literature for the 'closest' model organism. Due to slight variations in histone sequences between organisms and to the presence of initiator methionine in UniProtKB/Swiss-Prot sequences, the actual positions of modified amino acids in the sequence generally differ. In this entry the following conventions are used: H2BK6ac = acetylated Lys-7; H2BK33ac = acetylated Lys-35; H2BK34ac = acetylated Lys-36; H2BK143ub1 = monoubiquitinated Lys-143.</text>
</comment>
<reference key="1">
    <citation type="online journal article" date="1997" name="Plant Gene Register">
        <title>cDNA clones encoding histone H3 and histone H2B from upland cotton (Gossypium hirsutum L.).</title>
        <authorList>
            <person name="Turley R.B."/>
        </authorList>
        <locator>PGR97-182</locator>
    </citation>
    <scope>NUCLEOTIDE SEQUENCE [MRNA]</scope>
    <source>
        <strain>cv. Deltapine 62</strain>
        <tissue>Etiolated cotyledon</tissue>
    </source>
</reference>
<evidence type="ECO:0000250" key="1"/>
<evidence type="ECO:0000256" key="2">
    <source>
        <dbReference type="SAM" id="MobiDB-lite"/>
    </source>
</evidence>
<evidence type="ECO:0000305" key="3"/>
<feature type="initiator methionine" description="Removed" evidence="1">
    <location>
        <position position="1"/>
    </location>
</feature>
<feature type="chain" id="PRO_0000071914" description="Histone H2B">
    <location>
        <begin position="2"/>
        <end position="147"/>
    </location>
</feature>
<feature type="region of interest" description="Disordered" evidence="2">
    <location>
        <begin position="1"/>
        <end position="55"/>
    </location>
</feature>
<feature type="compositionally biased region" description="Basic and acidic residues" evidence="2">
    <location>
        <begin position="1"/>
        <end position="31"/>
    </location>
</feature>
<feature type="modified residue" description="N6-acetyllysine" evidence="1">
    <location>
        <position position="7"/>
    </location>
</feature>
<feature type="modified residue" description="N6-acetyllysine" evidence="1">
    <location>
        <position position="35"/>
    </location>
</feature>
<feature type="modified residue" description="N6-acetyllysine" evidence="1">
    <location>
        <position position="36"/>
    </location>
</feature>
<feature type="cross-link" description="Glycyl lysine isopeptide (Lys-Gly) (interchain with G-Cter in ubiquitin)" evidence="1">
    <location>
        <position position="143"/>
    </location>
</feature>
<organism>
    <name type="scientific">Gossypium hirsutum</name>
    <name type="common">Upland cotton</name>
    <name type="synonym">Gossypium mexicanum</name>
    <dbReference type="NCBI Taxonomy" id="3635"/>
    <lineage>
        <taxon>Eukaryota</taxon>
        <taxon>Viridiplantae</taxon>
        <taxon>Streptophyta</taxon>
        <taxon>Embryophyta</taxon>
        <taxon>Tracheophyta</taxon>
        <taxon>Spermatophyta</taxon>
        <taxon>Magnoliopsida</taxon>
        <taxon>eudicotyledons</taxon>
        <taxon>Gunneridae</taxon>
        <taxon>Pentapetalae</taxon>
        <taxon>rosids</taxon>
        <taxon>malvids</taxon>
        <taxon>Malvales</taxon>
        <taxon>Malvaceae</taxon>
        <taxon>Malvoideae</taxon>
        <taxon>Gossypium</taxon>
    </lineage>
</organism>
<gene>
    <name type="primary">HIS2B</name>
</gene>
<name>H2B_GOSHI</name>
<proteinExistence type="evidence at transcript level"/>